<proteinExistence type="evidence at transcript level"/>
<accession>Q6L4I2</accession>
<accession>A0A0P0WJ95</accession>
<accession>Q0DJY9</accession>
<comment type="catalytic activity">
    <reaction>
        <text>Endohydrolysis of (1-&gt;4)-beta-D-glucosidic linkages in cellulose, lichenin and cereal beta-D-glucans.</text>
        <dbReference type="EC" id="3.2.1.4"/>
    </reaction>
</comment>
<comment type="subcellular location">
    <subcellularLocation>
        <location evidence="1">Secreted</location>
    </subcellularLocation>
</comment>
<comment type="similarity">
    <text evidence="5 6">Belongs to the glycosyl hydrolase 9 (cellulase E) family.</text>
</comment>
<protein>
    <recommendedName>
        <fullName>Endoglucanase 15</fullName>
        <ecNumber>3.2.1.4</ecNumber>
    </recommendedName>
    <alternativeName>
        <fullName>Endo-1,4-beta glucanase 15</fullName>
    </alternativeName>
    <alternativeName>
        <fullName>OsCel9C</fullName>
    </alternativeName>
</protein>
<organism>
    <name type="scientific">Oryza sativa subsp. japonica</name>
    <name type="common">Rice</name>
    <dbReference type="NCBI Taxonomy" id="39947"/>
    <lineage>
        <taxon>Eukaryota</taxon>
        <taxon>Viridiplantae</taxon>
        <taxon>Streptophyta</taxon>
        <taxon>Embryophyta</taxon>
        <taxon>Tracheophyta</taxon>
        <taxon>Spermatophyta</taxon>
        <taxon>Magnoliopsida</taxon>
        <taxon>Liliopsida</taxon>
        <taxon>Poales</taxon>
        <taxon>Poaceae</taxon>
        <taxon>BOP clade</taxon>
        <taxon>Oryzoideae</taxon>
        <taxon>Oryzeae</taxon>
        <taxon>Oryzinae</taxon>
        <taxon>Oryza</taxon>
        <taxon>Oryza sativa</taxon>
    </lineage>
</organism>
<gene>
    <name type="ordered locus">Os05g0212300</name>
    <name type="ordered locus">LOC_Os05g12150</name>
    <name type="ORF">OSJNBa0074P11.11</name>
</gene>
<name>GUN15_ORYSJ</name>
<reference key="1">
    <citation type="journal article" date="2005" name="Mol. Genet. Genomics">
        <title>A fine physical map of the rice chromosome 5.</title>
        <authorList>
            <person name="Cheng C.-H."/>
            <person name="Chung M.C."/>
            <person name="Liu S.-M."/>
            <person name="Chen S.-K."/>
            <person name="Kao F.Y."/>
            <person name="Lin S.-J."/>
            <person name="Hsiao S.-H."/>
            <person name="Tseng I.C."/>
            <person name="Hsing Y.-I.C."/>
            <person name="Wu H.-P."/>
            <person name="Chen C.-S."/>
            <person name="Shaw J.-F."/>
            <person name="Wu J."/>
            <person name="Matsumoto T."/>
            <person name="Sasaki T."/>
            <person name="Chen H.-C."/>
            <person name="Chow T.-Y."/>
        </authorList>
    </citation>
    <scope>NUCLEOTIDE SEQUENCE [LARGE SCALE GENOMIC DNA]</scope>
    <source>
        <strain>cv. Nipponbare</strain>
    </source>
</reference>
<reference key="2">
    <citation type="journal article" date="2005" name="Nature">
        <title>The map-based sequence of the rice genome.</title>
        <authorList>
            <consortium name="International rice genome sequencing project (IRGSP)"/>
        </authorList>
    </citation>
    <scope>NUCLEOTIDE SEQUENCE [LARGE SCALE GENOMIC DNA]</scope>
    <source>
        <strain>cv. Nipponbare</strain>
    </source>
</reference>
<reference key="3">
    <citation type="journal article" date="2008" name="Nucleic Acids Res.">
        <title>The rice annotation project database (RAP-DB): 2008 update.</title>
        <authorList>
            <consortium name="The rice annotation project (RAP)"/>
        </authorList>
    </citation>
    <scope>GENOME REANNOTATION</scope>
    <source>
        <strain>cv. Nipponbare</strain>
    </source>
</reference>
<reference key="4">
    <citation type="journal article" date="2013" name="Rice">
        <title>Improvement of the Oryza sativa Nipponbare reference genome using next generation sequence and optical map data.</title>
        <authorList>
            <person name="Kawahara Y."/>
            <person name="de la Bastide M."/>
            <person name="Hamilton J.P."/>
            <person name="Kanamori H."/>
            <person name="McCombie W.R."/>
            <person name="Ouyang S."/>
            <person name="Schwartz D.C."/>
            <person name="Tanaka T."/>
            <person name="Wu J."/>
            <person name="Zhou S."/>
            <person name="Childs K.L."/>
            <person name="Davidson R.M."/>
            <person name="Lin H."/>
            <person name="Quesada-Ocampo L."/>
            <person name="Vaillancourt B."/>
            <person name="Sakai H."/>
            <person name="Lee S.S."/>
            <person name="Kim J."/>
            <person name="Numa H."/>
            <person name="Itoh T."/>
            <person name="Buell C.R."/>
            <person name="Matsumoto T."/>
        </authorList>
    </citation>
    <scope>GENOME REANNOTATION</scope>
    <source>
        <strain>cv. Nipponbare</strain>
    </source>
</reference>
<reference key="5">
    <citation type="journal article" date="2003" name="Science">
        <title>Collection, mapping, and annotation of over 28,000 cDNA clones from japonica rice.</title>
        <authorList>
            <consortium name="The rice full-length cDNA consortium"/>
        </authorList>
    </citation>
    <scope>NUCLEOTIDE SEQUENCE [LARGE SCALE MRNA]</scope>
    <source>
        <strain>cv. Nipponbare</strain>
    </source>
</reference>
<feature type="signal peptide" evidence="2">
    <location>
        <begin position="1"/>
        <end position="30"/>
    </location>
</feature>
<feature type="chain" id="PRO_0000249292" description="Endoglucanase 15">
    <location>
        <begin position="31"/>
        <end position="629"/>
    </location>
</feature>
<feature type="active site" description="Nucleophile" evidence="5">
    <location>
        <position position="87"/>
    </location>
</feature>
<feature type="active site" evidence="3">
    <location>
        <position position="421"/>
    </location>
</feature>
<feature type="active site" evidence="4">
    <location>
        <position position="473"/>
    </location>
</feature>
<feature type="active site" evidence="4">
    <location>
        <position position="482"/>
    </location>
</feature>
<feature type="glycosylation site" description="N-linked (GlcNAc...) asparagine" evidence="2">
    <location>
        <position position="520"/>
    </location>
</feature>
<feature type="glycosylation site" description="N-linked (GlcNAc...) asparagine" evidence="2">
    <location>
        <position position="540"/>
    </location>
</feature>
<feature type="glycosylation site" description="N-linked (GlcNAc...) asparagine" evidence="2">
    <location>
        <position position="561"/>
    </location>
</feature>
<feature type="sequence conflict" description="In Ref. 5; AK063458." evidence="6" ref="5">
    <original>G</original>
    <variation>E</variation>
    <location>
        <position position="284"/>
    </location>
</feature>
<sequence length="629" mass="68664">MAKNGGAHGAATLFGLLALASMVKLGFVAGGGHDYAMALRKSILYFQAQRSGVLPPNQRVSWRASSGLFDGKANGVDLVGGYYDAGDNVKFGLPMAFTVTMMSWSILEYGKQMAAAGELRNAMDAVKWGTDYFIKAHPEPDVLYGEVGDGDTDHSCWQRPEDMTTSRQAFRVDPQHPGSDLAAETAAAMAAASIVFRGTYPGYANLLLVHSKQLFEFADKYRGKYDASITVARNYYGSFSGYGDELLWAAAWLFEATEDRSYLEYLAGNGEALGGTGWSINQFGWDVKYPGVQVLAAKFLLQGRAGDHAAALQRYRQNAEFFVCSCVGKGAVNVARTPGGMMYHQRWNNLQFVTSASFLLTVYADFAAISGRGAVHCPAGAAQPFDILKFVKSQVNYILGDNPRGTSYMVGYGASYPRQVHHRGASIVSIKRDPSFVSCQEGYSSWYGREAGNPNLLDGAVVGGPDEYDDFADERDNYEQTEAATYNNAPLLGVLARLAASCGGLKEEEYEQETATPVVNRTSSSSSLPATATAIGIEQNVTGTWARRRRTYYRYAVTVTNRSRGKTVRELHLGVSGLRGRLWGLEEARYGYVPPRWLPALRPGRSLRFVYVQPAPAPANIWVTGYKLV</sequence>
<evidence type="ECO:0000250" key="1"/>
<evidence type="ECO:0000255" key="2"/>
<evidence type="ECO:0000255" key="3">
    <source>
        <dbReference type="PROSITE-ProRule" id="PRU10059"/>
    </source>
</evidence>
<evidence type="ECO:0000255" key="4">
    <source>
        <dbReference type="PROSITE-ProRule" id="PRU10060"/>
    </source>
</evidence>
<evidence type="ECO:0000255" key="5">
    <source>
        <dbReference type="PROSITE-ProRule" id="PRU10140"/>
    </source>
</evidence>
<evidence type="ECO:0000305" key="6"/>
<dbReference type="EC" id="3.2.1.4"/>
<dbReference type="EMBL" id="AC135914">
    <property type="protein sequence ID" value="AAT44235.1"/>
    <property type="molecule type" value="Genomic_DNA"/>
</dbReference>
<dbReference type="EMBL" id="AP008211">
    <property type="protein sequence ID" value="BAF16834.1"/>
    <property type="molecule type" value="Genomic_DNA"/>
</dbReference>
<dbReference type="EMBL" id="AP014961">
    <property type="protein sequence ID" value="BAS92803.1"/>
    <property type="molecule type" value="Genomic_DNA"/>
</dbReference>
<dbReference type="EMBL" id="AK063458">
    <property type="status" value="NOT_ANNOTATED_CDS"/>
    <property type="molecule type" value="mRNA"/>
</dbReference>
<dbReference type="SMR" id="Q6L4I2"/>
<dbReference type="FunCoup" id="Q6L4I2">
    <property type="interactions" value="108"/>
</dbReference>
<dbReference type="STRING" id="39947.Q6L4I2"/>
<dbReference type="CAZy" id="CBM49">
    <property type="family name" value="Carbohydrate-Binding Module Family 49"/>
</dbReference>
<dbReference type="CAZy" id="GH9">
    <property type="family name" value="Glycoside Hydrolase Family 9"/>
</dbReference>
<dbReference type="PaxDb" id="39947-Q6L4I2"/>
<dbReference type="EnsemblPlants" id="Os05t0212300-01">
    <property type="protein sequence ID" value="Os05t0212300-01"/>
    <property type="gene ID" value="Os05g0212300"/>
</dbReference>
<dbReference type="Gramene" id="Os05t0212300-01">
    <property type="protein sequence ID" value="Os05t0212300-01"/>
    <property type="gene ID" value="Os05g0212300"/>
</dbReference>
<dbReference type="KEGG" id="dosa:Os05g0212300"/>
<dbReference type="eggNOG" id="ENOG502QRF6">
    <property type="taxonomic scope" value="Eukaryota"/>
</dbReference>
<dbReference type="HOGENOM" id="CLU_008926_1_4_1"/>
<dbReference type="InParanoid" id="Q6L4I2"/>
<dbReference type="OMA" id="QGRLWGL"/>
<dbReference type="Proteomes" id="UP000000763">
    <property type="component" value="Chromosome 5"/>
</dbReference>
<dbReference type="Proteomes" id="UP000059680">
    <property type="component" value="Chromosome 5"/>
</dbReference>
<dbReference type="GO" id="GO:0005576">
    <property type="term" value="C:extracellular region"/>
    <property type="evidence" value="ECO:0007669"/>
    <property type="project" value="UniProtKB-SubCell"/>
</dbReference>
<dbReference type="GO" id="GO:0030246">
    <property type="term" value="F:carbohydrate binding"/>
    <property type="evidence" value="ECO:0007669"/>
    <property type="project" value="InterPro"/>
</dbReference>
<dbReference type="GO" id="GO:0008810">
    <property type="term" value="F:cellulase activity"/>
    <property type="evidence" value="ECO:0007669"/>
    <property type="project" value="UniProtKB-EC"/>
</dbReference>
<dbReference type="GO" id="GO:0071555">
    <property type="term" value="P:cell wall organization"/>
    <property type="evidence" value="ECO:0007669"/>
    <property type="project" value="UniProtKB-KW"/>
</dbReference>
<dbReference type="GO" id="GO:0030245">
    <property type="term" value="P:cellulose catabolic process"/>
    <property type="evidence" value="ECO:0007669"/>
    <property type="project" value="UniProtKB-KW"/>
</dbReference>
<dbReference type="FunFam" id="1.50.10.10:FF:000020">
    <property type="entry name" value="Endoglucanase"/>
    <property type="match status" value="1"/>
</dbReference>
<dbReference type="Gene3D" id="1.50.10.10">
    <property type="match status" value="1"/>
</dbReference>
<dbReference type="InterPro" id="IPR008928">
    <property type="entry name" value="6-hairpin_glycosidase_sf"/>
</dbReference>
<dbReference type="InterPro" id="IPR012341">
    <property type="entry name" value="6hp_glycosidase-like_sf"/>
</dbReference>
<dbReference type="InterPro" id="IPR019028">
    <property type="entry name" value="CBM_49"/>
</dbReference>
<dbReference type="InterPro" id="IPR001701">
    <property type="entry name" value="Glyco_hydro_9"/>
</dbReference>
<dbReference type="InterPro" id="IPR033126">
    <property type="entry name" value="Glyco_hydro_9_Asp/Glu_AS"/>
</dbReference>
<dbReference type="InterPro" id="IPR018221">
    <property type="entry name" value="Glyco_hydro_9_His_AS"/>
</dbReference>
<dbReference type="PANTHER" id="PTHR22298">
    <property type="entry name" value="ENDO-1,4-BETA-GLUCANASE"/>
    <property type="match status" value="1"/>
</dbReference>
<dbReference type="Pfam" id="PF09478">
    <property type="entry name" value="CBM49"/>
    <property type="match status" value="1"/>
</dbReference>
<dbReference type="Pfam" id="PF00759">
    <property type="entry name" value="Glyco_hydro_9"/>
    <property type="match status" value="1"/>
</dbReference>
<dbReference type="SMART" id="SM01063">
    <property type="entry name" value="CBM49"/>
    <property type="match status" value="1"/>
</dbReference>
<dbReference type="SUPFAM" id="SSF48208">
    <property type="entry name" value="Six-hairpin glycosidases"/>
    <property type="match status" value="1"/>
</dbReference>
<dbReference type="PROSITE" id="PS60032">
    <property type="entry name" value="GH9_1"/>
    <property type="match status" value="1"/>
</dbReference>
<dbReference type="PROSITE" id="PS00592">
    <property type="entry name" value="GH9_2"/>
    <property type="match status" value="1"/>
</dbReference>
<dbReference type="PROSITE" id="PS00698">
    <property type="entry name" value="GH9_3"/>
    <property type="match status" value="1"/>
</dbReference>
<keyword id="KW-0119">Carbohydrate metabolism</keyword>
<keyword id="KW-0961">Cell wall biogenesis/degradation</keyword>
<keyword id="KW-0136">Cellulose degradation</keyword>
<keyword id="KW-0325">Glycoprotein</keyword>
<keyword id="KW-0326">Glycosidase</keyword>
<keyword id="KW-0378">Hydrolase</keyword>
<keyword id="KW-0624">Polysaccharide degradation</keyword>
<keyword id="KW-1185">Reference proteome</keyword>
<keyword id="KW-0964">Secreted</keyword>
<keyword id="KW-0732">Signal</keyword>